<accession>Q8DH26</accession>
<keyword id="KW-0119">Carbohydrate metabolism</keyword>
<keyword id="KW-0963">Cytoplasm</keyword>
<keyword id="KW-0378">Hydrolase</keyword>
<keyword id="KW-0460">Magnesium</keyword>
<keyword id="KW-0479">Metal-binding</keyword>
<keyword id="KW-1185">Reference proteome</keyword>
<keyword id="KW-0862">Zinc</keyword>
<protein>
    <recommendedName>
        <fullName>D-glycero-D-manno-heptose-1,7-bisphosphate 7-phosphatase</fullName>
        <ecNumber>3.1.3.-</ecNumber>
    </recommendedName>
    <alternativeName>
        <fullName>D,D-heptose 1,7-bisphosphate phosphatase</fullName>
        <shortName>HBP phosphatase</shortName>
    </alternativeName>
</protein>
<feature type="chain" id="PRO_0000209407" description="D-glycero-D-manno-heptose-1,7-bisphosphate 7-phosphatase">
    <location>
        <begin position="1"/>
        <end position="196"/>
    </location>
</feature>
<feature type="active site" description="Nucleophile" evidence="1">
    <location>
        <position position="9"/>
    </location>
</feature>
<feature type="active site" description="Proton donor" evidence="1">
    <location>
        <position position="11"/>
    </location>
</feature>
<feature type="binding site" evidence="1">
    <location>
        <begin position="9"/>
        <end position="11"/>
    </location>
    <ligand>
        <name>substrate</name>
    </ligand>
</feature>
<feature type="binding site" evidence="1">
    <location>
        <position position="9"/>
    </location>
    <ligand>
        <name>Mg(2+)</name>
        <dbReference type="ChEBI" id="CHEBI:18420"/>
    </ligand>
</feature>
<feature type="binding site" evidence="1">
    <location>
        <position position="11"/>
    </location>
    <ligand>
        <name>Mg(2+)</name>
        <dbReference type="ChEBI" id="CHEBI:18420"/>
    </ligand>
</feature>
<feature type="binding site" evidence="1">
    <location>
        <begin position="17"/>
        <end position="20"/>
    </location>
    <ligand>
        <name>substrate</name>
    </ligand>
</feature>
<feature type="binding site" evidence="1">
    <location>
        <begin position="51"/>
        <end position="54"/>
    </location>
    <ligand>
        <name>substrate</name>
    </ligand>
</feature>
<feature type="binding site" evidence="1">
    <location>
        <begin position="112"/>
        <end position="113"/>
    </location>
    <ligand>
        <name>substrate</name>
    </ligand>
</feature>
<feature type="binding site" evidence="1">
    <location>
        <position position="138"/>
    </location>
    <ligand>
        <name>Mg(2+)</name>
        <dbReference type="ChEBI" id="CHEBI:18420"/>
    </ligand>
</feature>
<feature type="binding site" evidence="1">
    <location>
        <position position="139"/>
    </location>
    <ligand>
        <name>Mg(2+)</name>
        <dbReference type="ChEBI" id="CHEBI:18420"/>
    </ligand>
</feature>
<feature type="binding site" evidence="1">
    <location>
        <position position="139"/>
    </location>
    <ligand>
        <name>substrate</name>
    </ligand>
</feature>
<feature type="site" description="Stabilizes the phosphoryl group" evidence="1">
    <location>
        <position position="51"/>
    </location>
</feature>
<feature type="site" description="Contributes to substrate recognition" evidence="1">
    <location>
        <position position="112"/>
    </location>
</feature>
<feature type="site" description="Stabilizes the phosphoryl group" evidence="1">
    <location>
        <position position="113"/>
    </location>
</feature>
<comment type="function">
    <text evidence="1">Converts the D-glycero-D-manno-heptose 1,7-bisphosphate intermediate into D-glycero-D-manno-heptose 1-phosphate by removing the phosphate group at the C-7 position.</text>
</comment>
<comment type="catalytic activity">
    <reaction>
        <text>D-glycero-D-manno-heptose 1,7-bisphosphate + H2O = D-glycero-D-manno-heptose 1-phosphate + phosphate</text>
        <dbReference type="Rhea" id="RHEA:48504"/>
        <dbReference type="ChEBI" id="CHEBI:15377"/>
        <dbReference type="ChEBI" id="CHEBI:43474"/>
        <dbReference type="ChEBI" id="CHEBI:59957"/>
        <dbReference type="ChEBI" id="CHEBI:60002"/>
    </reaction>
</comment>
<comment type="cofactor">
    <cofactor evidence="1">
        <name>Mg(2+)</name>
        <dbReference type="ChEBI" id="CHEBI:18420"/>
    </cofactor>
</comment>
<comment type="cofactor">
    <cofactor evidence="1">
        <name>Zn(2+)</name>
        <dbReference type="ChEBI" id="CHEBI:29105"/>
    </cofactor>
</comment>
<comment type="subunit">
    <text evidence="1">Monomer.</text>
</comment>
<comment type="subcellular location">
    <subcellularLocation>
        <location evidence="1">Cytoplasm</location>
    </subcellularLocation>
</comment>
<comment type="similarity">
    <text evidence="2">Belongs to the GmhB family.</text>
</comment>
<proteinExistence type="inferred from homology"/>
<reference key="1">
    <citation type="journal article" date="2002" name="DNA Res.">
        <title>Complete genome structure of the thermophilic cyanobacterium Thermosynechococcus elongatus BP-1.</title>
        <authorList>
            <person name="Nakamura Y."/>
            <person name="Kaneko T."/>
            <person name="Sato S."/>
            <person name="Ikeuchi M."/>
            <person name="Katoh H."/>
            <person name="Sasamoto S."/>
            <person name="Watanabe A."/>
            <person name="Iriguchi M."/>
            <person name="Kawashima K."/>
            <person name="Kimura T."/>
            <person name="Kishida Y."/>
            <person name="Kiyokawa C."/>
            <person name="Kohara M."/>
            <person name="Matsumoto M."/>
            <person name="Matsuno A."/>
            <person name="Nakazaki N."/>
            <person name="Shimpo S."/>
            <person name="Sugimoto M."/>
            <person name="Takeuchi C."/>
            <person name="Yamada M."/>
            <person name="Tabata S."/>
        </authorList>
    </citation>
    <scope>NUCLEOTIDE SEQUENCE [LARGE SCALE GENOMIC DNA]</scope>
    <source>
        <strain>NIES-2133 / IAM M-273 / BP-1</strain>
    </source>
</reference>
<evidence type="ECO:0000250" key="1"/>
<evidence type="ECO:0000305" key="2"/>
<sequence length="196" mass="21487">MPRPAVFLDRDGVLNQEVGYIHRLEDLQLIPGVAQAVRRLNDAGWFCCLASNQSGPARDYYSIDHVHALHHRLQELLAASAGAVLDAVYFCPDLSRPEGGVVADYAGWTTWRKPNTGMLVAAAWDHDLDLSRSVMVGDKATDIDLARNAGCYGILVQTGFGDRVLEGSYQHASQPDYIAEDLAAAVEWICTHLAPR</sequence>
<gene>
    <name type="primary">gmhB</name>
    <name type="ordered locus">tlr2134</name>
</gene>
<dbReference type="EC" id="3.1.3.-"/>
<dbReference type="EMBL" id="BA000039">
    <property type="protein sequence ID" value="BAC09686.1"/>
    <property type="molecule type" value="Genomic_DNA"/>
</dbReference>
<dbReference type="RefSeq" id="NP_682924.1">
    <property type="nucleotide sequence ID" value="NC_004113.1"/>
</dbReference>
<dbReference type="RefSeq" id="WP_011057968.1">
    <property type="nucleotide sequence ID" value="NC_004113.1"/>
</dbReference>
<dbReference type="SMR" id="Q8DH26"/>
<dbReference type="STRING" id="197221.gene:10748745"/>
<dbReference type="EnsemblBacteria" id="BAC09686">
    <property type="protein sequence ID" value="BAC09686"/>
    <property type="gene ID" value="BAC09686"/>
</dbReference>
<dbReference type="KEGG" id="tel:tlr2134"/>
<dbReference type="PATRIC" id="fig|197221.4.peg.2236"/>
<dbReference type="eggNOG" id="COG0241">
    <property type="taxonomic scope" value="Bacteria"/>
</dbReference>
<dbReference type="Proteomes" id="UP000000440">
    <property type="component" value="Chromosome"/>
</dbReference>
<dbReference type="GO" id="GO:0005737">
    <property type="term" value="C:cytoplasm"/>
    <property type="evidence" value="ECO:0007669"/>
    <property type="project" value="UniProtKB-SubCell"/>
</dbReference>
<dbReference type="GO" id="GO:0034200">
    <property type="term" value="F:D-glycero-beta-D-manno-heptose 1,7-bisphosphate 7-phosphatase activity"/>
    <property type="evidence" value="ECO:0000250"/>
    <property type="project" value="UniProtKB"/>
</dbReference>
<dbReference type="GO" id="GO:0000287">
    <property type="term" value="F:magnesium ion binding"/>
    <property type="evidence" value="ECO:0000250"/>
    <property type="project" value="UniProtKB"/>
</dbReference>
<dbReference type="GO" id="GO:0008270">
    <property type="term" value="F:zinc ion binding"/>
    <property type="evidence" value="ECO:0000250"/>
    <property type="project" value="UniProtKB"/>
</dbReference>
<dbReference type="GO" id="GO:0005975">
    <property type="term" value="P:carbohydrate metabolic process"/>
    <property type="evidence" value="ECO:0007669"/>
    <property type="project" value="InterPro"/>
</dbReference>
<dbReference type="CDD" id="cd07503">
    <property type="entry name" value="HAD_HisB-N"/>
    <property type="match status" value="1"/>
</dbReference>
<dbReference type="FunFam" id="3.40.50.1000:FF:000037">
    <property type="entry name" value="D,D-heptose 1,7-bisphosphate phosphatase"/>
    <property type="match status" value="1"/>
</dbReference>
<dbReference type="Gene3D" id="3.40.50.1000">
    <property type="entry name" value="HAD superfamily/HAD-like"/>
    <property type="match status" value="1"/>
</dbReference>
<dbReference type="InterPro" id="IPR036412">
    <property type="entry name" value="HAD-like_sf"/>
</dbReference>
<dbReference type="InterPro" id="IPR006549">
    <property type="entry name" value="HAD-SF_hydro_IIIA"/>
</dbReference>
<dbReference type="InterPro" id="IPR023214">
    <property type="entry name" value="HAD_sf"/>
</dbReference>
<dbReference type="InterPro" id="IPR004446">
    <property type="entry name" value="Heptose_bisP_phosphatase"/>
</dbReference>
<dbReference type="InterPro" id="IPR006543">
    <property type="entry name" value="Histidinol-phos"/>
</dbReference>
<dbReference type="NCBIfam" id="TIGR01662">
    <property type="entry name" value="HAD-SF-IIIA"/>
    <property type="match status" value="1"/>
</dbReference>
<dbReference type="NCBIfam" id="TIGR01656">
    <property type="entry name" value="Histidinol-ppas"/>
    <property type="match status" value="1"/>
</dbReference>
<dbReference type="PANTHER" id="PTHR42891">
    <property type="entry name" value="D-GLYCERO-BETA-D-MANNO-HEPTOSE-1,7-BISPHOSPHATE 7-PHOSPHATASE"/>
    <property type="match status" value="1"/>
</dbReference>
<dbReference type="PANTHER" id="PTHR42891:SF1">
    <property type="entry name" value="D-GLYCERO-BETA-D-MANNO-HEPTOSE-1,7-BISPHOSPHATE 7-PHOSPHATASE"/>
    <property type="match status" value="1"/>
</dbReference>
<dbReference type="Pfam" id="PF13242">
    <property type="entry name" value="Hydrolase_like"/>
    <property type="match status" value="1"/>
</dbReference>
<dbReference type="PIRSF" id="PIRSF004682">
    <property type="entry name" value="GmhB"/>
    <property type="match status" value="1"/>
</dbReference>
<dbReference type="SUPFAM" id="SSF56784">
    <property type="entry name" value="HAD-like"/>
    <property type="match status" value="1"/>
</dbReference>
<organism>
    <name type="scientific">Thermosynechococcus vestitus (strain NIES-2133 / IAM M-273 / BP-1)</name>
    <dbReference type="NCBI Taxonomy" id="197221"/>
    <lineage>
        <taxon>Bacteria</taxon>
        <taxon>Bacillati</taxon>
        <taxon>Cyanobacteriota</taxon>
        <taxon>Cyanophyceae</taxon>
        <taxon>Acaryochloridales</taxon>
        <taxon>Thermosynechococcaceae</taxon>
        <taxon>Thermosynechococcus</taxon>
    </lineage>
</organism>
<name>GMHB_THEVB</name>